<protein>
    <recommendedName>
        <fullName evidence="9">Iron(III) enterobactin esterase</fullName>
        <ecNumber evidence="1 2 4">3.1.1.108</ecNumber>
    </recommendedName>
    <alternativeName>
        <fullName evidence="6">Enterochelin esterase</fullName>
    </alternativeName>
    <alternativeName>
        <fullName evidence="7">Ferric enterobactin esterase</fullName>
    </alternativeName>
</protein>
<dbReference type="EC" id="3.1.1.108" evidence="1 2 4"/>
<dbReference type="EMBL" id="J04216">
    <property type="protein sequence ID" value="AAA23757.1"/>
    <property type="status" value="ALT_INIT"/>
    <property type="molecule type" value="Genomic_DNA"/>
</dbReference>
<dbReference type="EMBL" id="U82598">
    <property type="protein sequence ID" value="AAB40784.1"/>
    <property type="molecule type" value="Genomic_DNA"/>
</dbReference>
<dbReference type="EMBL" id="U00096">
    <property type="protein sequence ID" value="AAC73686.2"/>
    <property type="molecule type" value="Genomic_DNA"/>
</dbReference>
<dbReference type="EMBL" id="AP009048">
    <property type="protein sequence ID" value="BAA35226.2"/>
    <property type="status" value="ALT_INIT"/>
    <property type="molecule type" value="Genomic_DNA"/>
</dbReference>
<dbReference type="PIR" id="A31958">
    <property type="entry name" value="BVECES"/>
</dbReference>
<dbReference type="RefSeq" id="NP_415117.2">
    <property type="nucleotide sequence ID" value="NC_000913.3"/>
</dbReference>
<dbReference type="RefSeq" id="WP_000125843.1">
    <property type="nucleotide sequence ID" value="NZ_SSZK01000032.1"/>
</dbReference>
<dbReference type="SMR" id="P13039"/>
<dbReference type="BioGRID" id="4259896">
    <property type="interactions" value="332"/>
</dbReference>
<dbReference type="DIP" id="DIP-9598N"/>
<dbReference type="FunCoup" id="P13039">
    <property type="interactions" value="93"/>
</dbReference>
<dbReference type="IntAct" id="P13039">
    <property type="interactions" value="5"/>
</dbReference>
<dbReference type="STRING" id="511145.b0585"/>
<dbReference type="ESTHER" id="ecoli-fes">
    <property type="family name" value="A85-IroE-IroD-Fes-Yiel"/>
</dbReference>
<dbReference type="PaxDb" id="511145-b0585"/>
<dbReference type="EnsemblBacteria" id="AAC73686">
    <property type="protein sequence ID" value="AAC73686"/>
    <property type="gene ID" value="b0585"/>
</dbReference>
<dbReference type="GeneID" id="945181"/>
<dbReference type="KEGG" id="ecj:JW0576"/>
<dbReference type="KEGG" id="eco:b0585"/>
<dbReference type="KEGG" id="ecoc:C3026_02915"/>
<dbReference type="PATRIC" id="fig|1411691.4.peg.1686"/>
<dbReference type="EchoBASE" id="EB0295"/>
<dbReference type="eggNOG" id="COG2382">
    <property type="taxonomic scope" value="Bacteria"/>
</dbReference>
<dbReference type="HOGENOM" id="CLU_024314_3_0_6"/>
<dbReference type="InParanoid" id="P13039"/>
<dbReference type="OMA" id="VEQCPID"/>
<dbReference type="OrthoDB" id="9775130at2"/>
<dbReference type="BioCyc" id="EcoCyc:EG10299-MONOMER"/>
<dbReference type="BioCyc" id="MetaCyc:EG10299-MONOMER"/>
<dbReference type="PHI-base" id="PHI:4859"/>
<dbReference type="PRO" id="PR:P13039"/>
<dbReference type="Proteomes" id="UP000000625">
    <property type="component" value="Chromosome"/>
</dbReference>
<dbReference type="GO" id="GO:0005737">
    <property type="term" value="C:cytoplasm"/>
    <property type="evidence" value="ECO:0007669"/>
    <property type="project" value="UniProtKB-SubCell"/>
</dbReference>
<dbReference type="GO" id="GO:0008849">
    <property type="term" value="F:enterochelin esterase activity"/>
    <property type="evidence" value="ECO:0000314"/>
    <property type="project" value="EcoliWiki"/>
</dbReference>
<dbReference type="GO" id="GO:0005506">
    <property type="term" value="F:iron ion binding"/>
    <property type="evidence" value="ECO:0007669"/>
    <property type="project" value="InterPro"/>
</dbReference>
<dbReference type="GO" id="GO:0046214">
    <property type="term" value="P:enterobactin catabolic process"/>
    <property type="evidence" value="ECO:0000315"/>
    <property type="project" value="EcoCyc"/>
</dbReference>
<dbReference type="GO" id="GO:0033214">
    <property type="term" value="P:siderophore-dependent iron import into cell"/>
    <property type="evidence" value="ECO:0000315"/>
    <property type="project" value="EcoCyc"/>
</dbReference>
<dbReference type="FunFam" id="2.60.40.10:FF:001518">
    <property type="entry name" value="Enterochelin esterase"/>
    <property type="match status" value="1"/>
</dbReference>
<dbReference type="FunFam" id="3.40.50.1820:FF:000162">
    <property type="entry name" value="Enterochelin esterase"/>
    <property type="match status" value="1"/>
</dbReference>
<dbReference type="Gene3D" id="3.40.50.1820">
    <property type="entry name" value="alpha/beta hydrolase"/>
    <property type="match status" value="1"/>
</dbReference>
<dbReference type="Gene3D" id="2.60.40.10">
    <property type="entry name" value="Immunoglobulins"/>
    <property type="match status" value="1"/>
</dbReference>
<dbReference type="InterPro" id="IPR029058">
    <property type="entry name" value="AB_hydrolase_fold"/>
</dbReference>
<dbReference type="InterPro" id="IPR021764">
    <property type="entry name" value="Enterochelin_esterase_N"/>
</dbReference>
<dbReference type="InterPro" id="IPR000801">
    <property type="entry name" value="Esterase-like"/>
</dbReference>
<dbReference type="InterPro" id="IPR013783">
    <property type="entry name" value="Ig-like_fold"/>
</dbReference>
<dbReference type="InterPro" id="IPR014756">
    <property type="entry name" value="Ig_E-set"/>
</dbReference>
<dbReference type="InterPro" id="IPR050583">
    <property type="entry name" value="Mycobacterial_A85_antigen"/>
</dbReference>
<dbReference type="NCBIfam" id="NF007758">
    <property type="entry name" value="PRK10439.1"/>
    <property type="match status" value="1"/>
</dbReference>
<dbReference type="PANTHER" id="PTHR48098">
    <property type="entry name" value="ENTEROCHELIN ESTERASE-RELATED"/>
    <property type="match status" value="1"/>
</dbReference>
<dbReference type="PANTHER" id="PTHR48098:SF3">
    <property type="entry name" value="IRON(III) ENTEROBACTIN ESTERASE"/>
    <property type="match status" value="1"/>
</dbReference>
<dbReference type="Pfam" id="PF11806">
    <property type="entry name" value="Enterochelin_N"/>
    <property type="match status" value="1"/>
</dbReference>
<dbReference type="Pfam" id="PF00756">
    <property type="entry name" value="Esterase"/>
    <property type="match status" value="1"/>
</dbReference>
<dbReference type="SUPFAM" id="SSF53474">
    <property type="entry name" value="alpha/beta-Hydrolases"/>
    <property type="match status" value="1"/>
</dbReference>
<dbReference type="SUPFAM" id="SSF81296">
    <property type="entry name" value="E set domains"/>
    <property type="match status" value="1"/>
</dbReference>
<organism>
    <name type="scientific">Escherichia coli (strain K12)</name>
    <dbReference type="NCBI Taxonomy" id="83333"/>
    <lineage>
        <taxon>Bacteria</taxon>
        <taxon>Pseudomonadati</taxon>
        <taxon>Pseudomonadota</taxon>
        <taxon>Gammaproteobacteria</taxon>
        <taxon>Enterobacterales</taxon>
        <taxon>Enterobacteriaceae</taxon>
        <taxon>Escherichia</taxon>
    </lineage>
</organism>
<feature type="chain" id="PRO_0000087230" description="Iron(III) enterobactin esterase">
    <location>
        <begin position="1"/>
        <end position="400"/>
    </location>
</feature>
<evidence type="ECO:0000269" key="1">
    <source>
    </source>
</evidence>
<evidence type="ECO:0000269" key="2">
    <source>
    </source>
</evidence>
<evidence type="ECO:0000269" key="3">
    <source>
    </source>
</evidence>
<evidence type="ECO:0000269" key="4">
    <source>
    </source>
</evidence>
<evidence type="ECO:0000269" key="5">
    <source>
    </source>
</evidence>
<evidence type="ECO:0000303" key="6">
    <source>
    </source>
</evidence>
<evidence type="ECO:0000303" key="7">
    <source>
    </source>
</evidence>
<evidence type="ECO:0000303" key="8">
    <source>
    </source>
</evidence>
<evidence type="ECO:0000305" key="9"/>
<evidence type="ECO:0000305" key="10">
    <source>
    </source>
</evidence>
<sequence length="400" mass="45652">MTALKVGSESWWQSKHGPEWQRLNDEMFEVTFWWRDPQGSEEYSTIKRVWVYITGVTDHHQNSQPQSMQRIAGTNVWQWTTQLNANWRGSYCFIPTERDDIFSVPSPDRLELREGWRKLLPQAIADPLNLQSWKGGRGHAVSALEMPQAPLQPGWDCPQAPEIPAKEIIWKSERLKKSRRVWIFTTGDATAEERPLAVLLDGEFWAQSMPVWPVLTSLTHRQQLPPAVYVLIDAIDTTHRAHELPCNADFWLAVQQELLPLVKAIAPFSDRADRTVVAGQSFGGLSALYAGLHWPERFGCVLSQSGSYWWPHRGGQQEGVLLEKLKAGEVSAEGLRIVLEAGIREPMIMRANQALYAQLHPIKESIFWRQVDGGHDALCWRGGLMQGLIDLWQPLFHDRS</sequence>
<gene>
    <name evidence="8" type="primary">fes</name>
    <name type="ordered locus">b0585</name>
    <name type="ordered locus">JW0576</name>
</gene>
<reference key="1">
    <citation type="journal article" date="1988" name="J. Biol. Chem.">
        <title>Transcriptional mapping and nucleotide sequence of the Escherichia coli fepA-fes enterobactin region. Identification of a unique iron-regulated bidirectional promoter.</title>
        <authorList>
            <person name="Pettis G.S."/>
            <person name="Brickman T.J."/>
            <person name="McIntosh M.A."/>
        </authorList>
    </citation>
    <scope>NUCLEOTIDE SEQUENCE [GENOMIC DNA]</scope>
    <scope>PROTEIN SEQUENCE OF 27-31</scope>
</reference>
<reference key="2">
    <citation type="submission" date="1997-01" db="EMBL/GenBank/DDBJ databases">
        <title>Sequence of minutes 4-25 of Escherichia coli.</title>
        <authorList>
            <person name="Chung E."/>
            <person name="Allen E."/>
            <person name="Araujo R."/>
            <person name="Aparicio A.M."/>
            <person name="Davis K."/>
            <person name="Duncan M."/>
            <person name="Federspiel N."/>
            <person name="Hyman R."/>
            <person name="Kalman S."/>
            <person name="Komp C."/>
            <person name="Kurdi O."/>
            <person name="Lew H."/>
            <person name="Lin D."/>
            <person name="Namath A."/>
            <person name="Oefner P."/>
            <person name="Roberts D."/>
            <person name="Schramm S."/>
            <person name="Davis R.W."/>
        </authorList>
    </citation>
    <scope>NUCLEOTIDE SEQUENCE [LARGE SCALE GENOMIC DNA]</scope>
    <source>
        <strain>K12 / MG1655 / ATCC 47076</strain>
    </source>
</reference>
<reference key="3">
    <citation type="journal article" date="1997" name="Science">
        <title>The complete genome sequence of Escherichia coli K-12.</title>
        <authorList>
            <person name="Blattner F.R."/>
            <person name="Plunkett G. III"/>
            <person name="Bloch C.A."/>
            <person name="Perna N.T."/>
            <person name="Burland V."/>
            <person name="Riley M."/>
            <person name="Collado-Vides J."/>
            <person name="Glasner J.D."/>
            <person name="Rode C.K."/>
            <person name="Mayhew G.F."/>
            <person name="Gregor J."/>
            <person name="Davis N.W."/>
            <person name="Kirkpatrick H.A."/>
            <person name="Goeden M.A."/>
            <person name="Rose D.J."/>
            <person name="Mau B."/>
            <person name="Shao Y."/>
        </authorList>
    </citation>
    <scope>NUCLEOTIDE SEQUENCE [LARGE SCALE GENOMIC DNA]</scope>
    <source>
        <strain>K12 / MG1655 / ATCC 47076</strain>
    </source>
</reference>
<reference key="4">
    <citation type="journal article" date="2006" name="Mol. Syst. Biol.">
        <title>Highly accurate genome sequences of Escherichia coli K-12 strains MG1655 and W3110.</title>
        <authorList>
            <person name="Hayashi K."/>
            <person name="Morooka N."/>
            <person name="Yamamoto Y."/>
            <person name="Fujita K."/>
            <person name="Isono K."/>
            <person name="Choi S."/>
            <person name="Ohtsubo E."/>
            <person name="Baba T."/>
            <person name="Wanner B.L."/>
            <person name="Mori H."/>
            <person name="Horiuchi T."/>
        </authorList>
    </citation>
    <scope>NUCLEOTIDE SEQUENCE [LARGE SCALE GENOMIC DNA]</scope>
    <source>
        <strain>K12 / W3110 / ATCC 27325 / DSM 5911</strain>
    </source>
</reference>
<reference key="5">
    <citation type="journal article" date="1996" name="DNA Res.">
        <title>A 718-kb DNA sequence of the Escherichia coli K-12 genome corresponding to the 12.7-28.0 min region on the linkage map.</title>
        <authorList>
            <person name="Oshima T."/>
            <person name="Aiba H."/>
            <person name="Baba T."/>
            <person name="Fujita K."/>
            <person name="Hayashi K."/>
            <person name="Honjo A."/>
            <person name="Ikemoto K."/>
            <person name="Inada T."/>
            <person name="Itoh T."/>
            <person name="Kajihara M."/>
            <person name="Kanai K."/>
            <person name="Kashimoto K."/>
            <person name="Kimura S."/>
            <person name="Kitagawa M."/>
            <person name="Makino K."/>
            <person name="Masuda S."/>
            <person name="Miki T."/>
            <person name="Mizobuchi K."/>
            <person name="Mori H."/>
            <person name="Motomura K."/>
            <person name="Nakamura Y."/>
            <person name="Nashimoto H."/>
            <person name="Nishio Y."/>
            <person name="Saito N."/>
            <person name="Sampei G."/>
            <person name="Seki Y."/>
            <person name="Tagami H."/>
            <person name="Takemoto K."/>
            <person name="Wada C."/>
            <person name="Yamamoto Y."/>
            <person name="Yano M."/>
            <person name="Horiuchi T."/>
        </authorList>
    </citation>
    <scope>NUCLEOTIDE SEQUENCE [GENOMIC DNA] OF 1-307</scope>
    <source>
        <strain>K12 / W3110 / ATCC 27325 / DSM 5911</strain>
    </source>
</reference>
<reference key="6">
    <citation type="journal article" date="2013" name="Mol. Cell. Proteomics">
        <title>Deep coverage of the Escherichia coli proteome enables the assessment of false discovery rates in simple proteogenomic experiments.</title>
        <authorList>
            <person name="Krug K."/>
            <person name="Carpy A."/>
            <person name="Behrends G."/>
            <person name="Matic K."/>
            <person name="Soares N.C."/>
            <person name="Macek B."/>
        </authorList>
    </citation>
    <scope>PROTEIN SEQUENCE OF 6-15</scope>
    <source>
        <strain>K12 / BW25113</strain>
    </source>
</reference>
<reference key="7">
    <citation type="journal article" date="1978" name="Biochim. Biophys. Acta">
        <title>Enzymatic hydrolysis of enterochelin and its iron complex in Escherichia Coli K-12. Properties of enterochelin esterase.</title>
        <authorList>
            <person name="Greenwood K.T."/>
            <person name="Luke R.K."/>
        </authorList>
    </citation>
    <scope>FUNCTION</scope>
    <scope>CATALYTIC ACTIVITY</scope>
    <scope>ACTIVITY REGULATION</scope>
    <source>
        <strain>K12</strain>
    </source>
</reference>
<reference key="8">
    <citation type="journal article" date="1987" name="J. Bacteriol.">
        <title>Molecular characterization of the Escherichia coli enterobactin cistron entF and coupled expression of entF and the fes gene.</title>
        <authorList>
            <person name="Pettis G.S."/>
            <person name="McIntosh M.A."/>
        </authorList>
    </citation>
    <scope>INDUCTION</scope>
    <source>
        <strain>K12 / MC4100 / ATCC 35695 / DSM 6574</strain>
    </source>
</reference>
<reference key="9">
    <citation type="journal article" date="1992" name="J. Biol. Chem.">
        <title>Overexpression and purification of ferric enterobactin esterase from Escherichia coli. Demonstration of enzymatic hydrolysis of enterobactin and its iron complex.</title>
        <authorList>
            <person name="Brickman T.J."/>
            <person name="McIntosh M.A."/>
        </authorList>
    </citation>
    <scope>FUNCTION</scope>
    <scope>CATALYTIC ACTIVITY</scope>
    <scope>SUBUNIT</scope>
    <scope>SUBCELLULAR LOCATION</scope>
</reference>
<reference key="10">
    <citation type="journal article" date="1994" name="BioMetals">
        <title>HPLC separation of enterobactin and linear 2,3-dihydroxybenzoylserine derivatives: a study on mutants of Escherichia coli defective in regulation (fur), esterase (fes) and transport (fepA).</title>
        <authorList>
            <person name="Winkelmann G."/>
            <person name="Cansier A."/>
            <person name="Beck W."/>
            <person name="Jung G."/>
        </authorList>
    </citation>
    <scope>FUNCTION</scope>
    <scope>CATALYTIC ACTIVITY</scope>
    <scope>DISRUPTION PHENOTYPE</scope>
</reference>
<reference key="11">
    <citation type="journal article" date="1998" name="J. Bacteriol.">
        <title>Coordinated repression in vitro of the divergent fepA-fes promoters of Escherichia coli by the iron uptake regulation (Fur) protein.</title>
        <authorList>
            <person name="Escolar L."/>
            <person name="Perez-Martin J."/>
            <person name="de Lorenzo V."/>
        </authorList>
    </citation>
    <scope>INDUCTION</scope>
</reference>
<accession>P13039</accession>
<accession>P77094</accession>
<comment type="function">
    <text evidence="1 2 4">Catalyzes the hydrolysis of ferric enterobactin (Fe-Ent) (PubMed:150859, PubMed:1534808, PubMed:8148617). Is responsible for the release of iron from ferric enterobactin (PubMed:1534808). Also catalyzes the hydrolysis of iron-free enterobactin (Ent) (PubMed:150859, PubMed:1534808, PubMed:8148617). Cleavage of ferric enterobactin results in a mixture of three hydrolysis products, 2,3-dihydroxybenzoylserine (DHBS), the linear dimer (DHBS)2 and the linear trimer (DHBS)3, while cleavage of iron-free enterobactin yields only the monomer (PubMed:8148617). Hydrolysis of ferric enterobactin is less efficient than hydrolysis of unliganded enterobactin (PubMed:150859, PubMed:1534808). It also cleaves the aluminum (III) complex at a rate similar to the ferric complex (PubMed:1534808).</text>
</comment>
<comment type="catalytic activity">
    <reaction evidence="1 2 4">
        <text>Fe(III)-enterobactin + 3 H2O + H(+) = Fe(III)-[N-(2,3-dihydroxybenzoyl)-L-serine] + 2 N-(2,3-dihydroxybenzoyl)-L-serine</text>
        <dbReference type="Rhea" id="RHEA:30111"/>
        <dbReference type="ChEBI" id="CHEBI:15377"/>
        <dbReference type="ChEBI" id="CHEBI:15378"/>
        <dbReference type="ChEBI" id="CHEBI:28199"/>
        <dbReference type="ChEBI" id="CHEBI:58154"/>
        <dbReference type="ChEBI" id="CHEBI:143010"/>
        <dbReference type="EC" id="3.1.1.108"/>
    </reaction>
    <physiologicalReaction direction="left-to-right" evidence="1 2 4">
        <dbReference type="Rhea" id="RHEA:30112"/>
    </physiologicalReaction>
</comment>
<comment type="catalytic activity">
    <reaction evidence="4">
        <text>Fe(III)-enterobactin + H2O = Fe(III)-[N-(2,3-dihydroxybenzoyl)-L-serine]3 + H(+)</text>
        <dbReference type="Rhea" id="RHEA:59256"/>
        <dbReference type="ChEBI" id="CHEBI:15377"/>
        <dbReference type="ChEBI" id="CHEBI:15378"/>
        <dbReference type="ChEBI" id="CHEBI:28199"/>
        <dbReference type="ChEBI" id="CHEBI:143011"/>
    </reaction>
    <physiologicalReaction direction="left-to-right" evidence="4">
        <dbReference type="Rhea" id="RHEA:59257"/>
    </physiologicalReaction>
</comment>
<comment type="catalytic activity">
    <reaction evidence="4">
        <text>Fe(III)-[N-(2,3-dihydroxybenzoyl)-L-serine]3 + H2O + H(+) = Fe(III)-[N-(2,3-dihydroxybenzoyl)-L-serine]2 + N-(2,3-dihydroxybenzoyl)-L-serine</text>
        <dbReference type="Rhea" id="RHEA:59260"/>
        <dbReference type="ChEBI" id="CHEBI:15377"/>
        <dbReference type="ChEBI" id="CHEBI:15378"/>
        <dbReference type="ChEBI" id="CHEBI:58154"/>
        <dbReference type="ChEBI" id="CHEBI:143011"/>
        <dbReference type="ChEBI" id="CHEBI:143012"/>
    </reaction>
    <physiologicalReaction direction="left-to-right" evidence="4">
        <dbReference type="Rhea" id="RHEA:59261"/>
    </physiologicalReaction>
</comment>
<comment type="catalytic activity">
    <reaction evidence="4">
        <text>Fe(III)-[N-(2,3-dihydroxybenzoyl)-L-serine]2 + H2O + H(+) = Fe(III)-[N-(2,3-dihydroxybenzoyl)-L-serine] + N-(2,3-dihydroxybenzoyl)-L-serine</text>
        <dbReference type="Rhea" id="RHEA:59264"/>
        <dbReference type="ChEBI" id="CHEBI:15377"/>
        <dbReference type="ChEBI" id="CHEBI:15378"/>
        <dbReference type="ChEBI" id="CHEBI:58154"/>
        <dbReference type="ChEBI" id="CHEBI:143010"/>
        <dbReference type="ChEBI" id="CHEBI:143012"/>
    </reaction>
    <physiologicalReaction direction="left-to-right" evidence="4">
        <dbReference type="Rhea" id="RHEA:59265"/>
    </physiologicalReaction>
</comment>
<comment type="catalytic activity">
    <reaction evidence="1 2 4">
        <text>enterobactin + 3 H2O = 3 N-(2,3-dihydroxybenzoyl)-L-serine + 2 H(+)</text>
        <dbReference type="Rhea" id="RHEA:28018"/>
        <dbReference type="ChEBI" id="CHEBI:15377"/>
        <dbReference type="ChEBI" id="CHEBI:15378"/>
        <dbReference type="ChEBI" id="CHEBI:58154"/>
        <dbReference type="ChEBI" id="CHEBI:77805"/>
    </reaction>
</comment>
<comment type="activity regulation">
    <text evidence="1">Inhibited by N-ethylmaleimide.</text>
</comment>
<comment type="subunit">
    <text evidence="2">Monomer.</text>
</comment>
<comment type="subcellular location">
    <subcellularLocation>
        <location evidence="10">Cytoplasm</location>
    </subcellularLocation>
</comment>
<comment type="induction">
    <text evidence="3 5">Expression is increased under iron stress (PubMed:3040679). Repressed by Fur under iron-rich conditions (PubMed:9573216).</text>
</comment>
<comment type="disruption phenotype">
    <text evidence="4">Mutant is unable to produce linear DHBS compounds.</text>
</comment>
<comment type="similarity">
    <text evidence="9">Belongs to the Fes family.</text>
</comment>
<comment type="sequence caution" evidence="9">
    <conflict type="erroneous initiation">
        <sequence resource="EMBL-CDS" id="AAA23757"/>
    </conflict>
    <text>Truncated N-terminus.</text>
</comment>
<comment type="sequence caution" evidence="9">
    <conflict type="erroneous initiation">
        <sequence resource="EMBL-CDS" id="BAA35226"/>
    </conflict>
    <text>Truncated N-terminus.</text>
</comment>
<proteinExistence type="evidence at protein level"/>
<keyword id="KW-0963">Cytoplasm</keyword>
<keyword id="KW-0903">Direct protein sequencing</keyword>
<keyword id="KW-0378">Hydrolase</keyword>
<keyword id="KW-1185">Reference proteome</keyword>
<name>FES_ECOLI</name>